<keyword id="KW-0040">ANK repeat</keyword>
<keyword id="KW-0966">Cell projection</keyword>
<keyword id="KW-0969">Cilium</keyword>
<keyword id="KW-0479">Metal-binding</keyword>
<keyword id="KW-1185">Reference proteome</keyword>
<keyword id="KW-0677">Repeat</keyword>
<keyword id="KW-0862">Zinc</keyword>
<keyword id="KW-0863">Zinc-finger</keyword>
<comment type="function">
    <text evidence="1">May be involved in the trafficking of signaling proteins to the cilia.</text>
</comment>
<comment type="subunit">
    <text evidence="1">Interacts with the retinal-specific guanylyl cyclase GC1.</text>
</comment>
<comment type="subcellular location">
    <subcellularLocation>
        <location evidence="1">Cell projection</location>
        <location evidence="1">Cilium</location>
    </subcellularLocation>
</comment>
<proteinExistence type="evidence at transcript level"/>
<gene>
    <name type="primary">ANKMY2</name>
</gene>
<evidence type="ECO:0000250" key="1"/>
<evidence type="ECO:0000255" key="2">
    <source>
        <dbReference type="PROSITE-ProRule" id="PRU00134"/>
    </source>
</evidence>
<evidence type="ECO:0000256" key="3">
    <source>
        <dbReference type="SAM" id="MobiDB-lite"/>
    </source>
</evidence>
<sequence>MVHIKKGELTQEEKELLEVIGKGTVQEAGTLLGSKNVRVNCLDENGMTPLMHAAYKGKLDMCKLLLRHGADVNCHQHEHGYTALMFAALSGNKDITWVMLEAGAETDVVNSVGRTAAQMAAFVGQHDCVTIINNFFPREKLDYYTKPQGLDKEPKLPPKLAGPLHKIITTTNLHPVKIVMLINENPLLAEEAALNKCYKVMDLICEKCMKQRDMNEVLAMKMHYISCIFQKCINFLKDRENKLDTLIKSLLKGRASDGFPVYQEKIIRESIRKFPYCEATLLQQLVRSIAPVEIGSDPTAFSVLTQAITGQVGFVDVEFCTTCGEKGASKRCSVCKMVIYCDQTCQKTHWFAHKKICKNLKDIYEKQQLEAAKAKSEEENNSKLDVNSNCVGEERLEEAETRICQKNDNPKDSEEGEKESLQSDAGLEGLQEAAVGPQVSEE</sequence>
<organism>
    <name type="scientific">Bos taurus</name>
    <name type="common">Bovine</name>
    <dbReference type="NCBI Taxonomy" id="9913"/>
    <lineage>
        <taxon>Eukaryota</taxon>
        <taxon>Metazoa</taxon>
        <taxon>Chordata</taxon>
        <taxon>Craniata</taxon>
        <taxon>Vertebrata</taxon>
        <taxon>Euteleostomi</taxon>
        <taxon>Mammalia</taxon>
        <taxon>Eutheria</taxon>
        <taxon>Laurasiatheria</taxon>
        <taxon>Artiodactyla</taxon>
        <taxon>Ruminantia</taxon>
        <taxon>Pecora</taxon>
        <taxon>Bovidae</taxon>
        <taxon>Bovinae</taxon>
        <taxon>Bos</taxon>
    </lineage>
</organism>
<name>ANKY2_BOVIN</name>
<reference key="1">
    <citation type="submission" date="2006-08" db="EMBL/GenBank/DDBJ databases">
        <authorList>
            <consortium name="NIH - Mammalian Gene Collection (MGC) project"/>
        </authorList>
    </citation>
    <scope>NUCLEOTIDE SEQUENCE [LARGE SCALE MRNA]</scope>
    <source>
        <strain>Hereford</strain>
        <tissue>Fetal cerebellum</tissue>
    </source>
</reference>
<dbReference type="EMBL" id="BC120022">
    <property type="protein sequence ID" value="AAI20023.1"/>
    <property type="molecule type" value="mRNA"/>
</dbReference>
<dbReference type="RefSeq" id="NP_001068852.1">
    <property type="nucleotide sequence ID" value="NM_001075384.2"/>
</dbReference>
<dbReference type="RefSeq" id="XP_005205233.1">
    <property type="nucleotide sequence ID" value="XM_005205176.5"/>
</dbReference>
<dbReference type="SMR" id="Q0VCS9"/>
<dbReference type="FunCoup" id="Q0VCS9">
    <property type="interactions" value="3309"/>
</dbReference>
<dbReference type="STRING" id="9913.ENSBTAP00000014576"/>
<dbReference type="PaxDb" id="9913-ENSBTAP00000014576"/>
<dbReference type="Ensembl" id="ENSBTAT00000014576.6">
    <property type="protein sequence ID" value="ENSBTAP00000014576.5"/>
    <property type="gene ID" value="ENSBTAG00000010980.7"/>
</dbReference>
<dbReference type="GeneID" id="509032"/>
<dbReference type="KEGG" id="bta:509032"/>
<dbReference type="CTD" id="57037"/>
<dbReference type="VEuPathDB" id="HostDB:ENSBTAG00000010980"/>
<dbReference type="VGNC" id="VGNC:25906">
    <property type="gene designation" value="ANKMY2"/>
</dbReference>
<dbReference type="eggNOG" id="KOG1710">
    <property type="taxonomic scope" value="Eukaryota"/>
</dbReference>
<dbReference type="GeneTree" id="ENSGT00390000016820"/>
<dbReference type="HOGENOM" id="CLU_048951_0_0_1"/>
<dbReference type="InParanoid" id="Q0VCS9"/>
<dbReference type="OMA" id="EFPFREC"/>
<dbReference type="OrthoDB" id="10257049at2759"/>
<dbReference type="TreeFam" id="TF351374"/>
<dbReference type="Proteomes" id="UP000009136">
    <property type="component" value="Chromosome 4"/>
</dbReference>
<dbReference type="Bgee" id="ENSBTAG00000010980">
    <property type="expression patterns" value="Expressed in prostate gland and 106 other cell types or tissues"/>
</dbReference>
<dbReference type="GO" id="GO:0005929">
    <property type="term" value="C:cilium"/>
    <property type="evidence" value="ECO:0007669"/>
    <property type="project" value="UniProtKB-SubCell"/>
</dbReference>
<dbReference type="GO" id="GO:0019899">
    <property type="term" value="F:enzyme binding"/>
    <property type="evidence" value="ECO:0007669"/>
    <property type="project" value="Ensembl"/>
</dbReference>
<dbReference type="GO" id="GO:0008270">
    <property type="term" value="F:zinc ion binding"/>
    <property type="evidence" value="ECO:0007669"/>
    <property type="project" value="UniProtKB-KW"/>
</dbReference>
<dbReference type="FunFam" id="1.25.40.20:FF:000182">
    <property type="entry name" value="Ankyrin repeat and MYND domain containing 2a"/>
    <property type="match status" value="1"/>
</dbReference>
<dbReference type="FunFam" id="6.10.140.2220:FF:000010">
    <property type="entry name" value="Ankyrin repeat and MYND domain-containing protein 2"/>
    <property type="match status" value="1"/>
</dbReference>
<dbReference type="Gene3D" id="6.10.140.2220">
    <property type="match status" value="1"/>
</dbReference>
<dbReference type="Gene3D" id="1.25.40.20">
    <property type="entry name" value="Ankyrin repeat-containing domain"/>
    <property type="match status" value="1"/>
</dbReference>
<dbReference type="InterPro" id="IPR052452">
    <property type="entry name" value="Ankyrin-MYND_dom_contain_2"/>
</dbReference>
<dbReference type="InterPro" id="IPR002110">
    <property type="entry name" value="Ankyrin_rpt"/>
</dbReference>
<dbReference type="InterPro" id="IPR036770">
    <property type="entry name" value="Ankyrin_rpt-contain_sf"/>
</dbReference>
<dbReference type="InterPro" id="IPR002893">
    <property type="entry name" value="Znf_MYND"/>
</dbReference>
<dbReference type="PANTHER" id="PTHR24150">
    <property type="entry name" value="ANKYRIN REPEAT AND MYND DOMAIN-CONTAINING PROTEIN 2"/>
    <property type="match status" value="1"/>
</dbReference>
<dbReference type="PANTHER" id="PTHR24150:SF8">
    <property type="entry name" value="ANKYRIN REPEAT AND MYND DOMAIN-CONTAINING PROTEIN 2"/>
    <property type="match status" value="1"/>
</dbReference>
<dbReference type="Pfam" id="PF12796">
    <property type="entry name" value="Ank_2"/>
    <property type="match status" value="1"/>
</dbReference>
<dbReference type="Pfam" id="PF01753">
    <property type="entry name" value="zf-MYND"/>
    <property type="match status" value="1"/>
</dbReference>
<dbReference type="SMART" id="SM00248">
    <property type="entry name" value="ANK"/>
    <property type="match status" value="3"/>
</dbReference>
<dbReference type="SUPFAM" id="SSF48403">
    <property type="entry name" value="Ankyrin repeat"/>
    <property type="match status" value="1"/>
</dbReference>
<dbReference type="SUPFAM" id="SSF144232">
    <property type="entry name" value="HIT/MYND zinc finger-like"/>
    <property type="match status" value="1"/>
</dbReference>
<dbReference type="PROSITE" id="PS50297">
    <property type="entry name" value="ANK_REP_REGION"/>
    <property type="match status" value="1"/>
</dbReference>
<dbReference type="PROSITE" id="PS50088">
    <property type="entry name" value="ANK_REPEAT"/>
    <property type="match status" value="2"/>
</dbReference>
<dbReference type="PROSITE" id="PS01360">
    <property type="entry name" value="ZF_MYND_1"/>
    <property type="match status" value="1"/>
</dbReference>
<dbReference type="PROSITE" id="PS50865">
    <property type="entry name" value="ZF_MYND_2"/>
    <property type="match status" value="1"/>
</dbReference>
<feature type="chain" id="PRO_0000263083" description="Ankyrin repeat and MYND domain-containing protein 2">
    <location>
        <begin position="1"/>
        <end position="442"/>
    </location>
</feature>
<feature type="repeat" description="ANK 1">
    <location>
        <begin position="45"/>
        <end position="74"/>
    </location>
</feature>
<feature type="repeat" description="ANK 2">
    <location>
        <begin position="79"/>
        <end position="108"/>
    </location>
</feature>
<feature type="repeat" description="ANK 3">
    <location>
        <begin position="159"/>
        <end position="188"/>
    </location>
</feature>
<feature type="zinc finger region" description="MYND-type" evidence="2">
    <location>
        <begin position="320"/>
        <end position="357"/>
    </location>
</feature>
<feature type="region of interest" description="Disordered" evidence="3">
    <location>
        <begin position="401"/>
        <end position="442"/>
    </location>
</feature>
<feature type="compositionally biased region" description="Basic and acidic residues" evidence="3">
    <location>
        <begin position="401"/>
        <end position="421"/>
    </location>
</feature>
<feature type="binding site" evidence="2">
    <location>
        <position position="320"/>
    </location>
    <ligand>
        <name>Zn(2+)</name>
        <dbReference type="ChEBI" id="CHEBI:29105"/>
        <label>1</label>
    </ligand>
</feature>
<feature type="binding site" evidence="2">
    <location>
        <position position="323"/>
    </location>
    <ligand>
        <name>Zn(2+)</name>
        <dbReference type="ChEBI" id="CHEBI:29105"/>
        <label>1</label>
    </ligand>
</feature>
<feature type="binding site" evidence="2">
    <location>
        <position position="332"/>
    </location>
    <ligand>
        <name>Zn(2+)</name>
        <dbReference type="ChEBI" id="CHEBI:29105"/>
        <label>2</label>
    </ligand>
</feature>
<feature type="binding site" evidence="2">
    <location>
        <position position="335"/>
    </location>
    <ligand>
        <name>Zn(2+)</name>
        <dbReference type="ChEBI" id="CHEBI:29105"/>
        <label>2</label>
    </ligand>
</feature>
<feature type="binding site" evidence="2">
    <location>
        <position position="341"/>
    </location>
    <ligand>
        <name>Zn(2+)</name>
        <dbReference type="ChEBI" id="CHEBI:29105"/>
        <label>1</label>
    </ligand>
</feature>
<feature type="binding site" evidence="2">
    <location>
        <position position="345"/>
    </location>
    <ligand>
        <name>Zn(2+)</name>
        <dbReference type="ChEBI" id="CHEBI:29105"/>
        <label>1</label>
    </ligand>
</feature>
<feature type="binding site" evidence="2">
    <location>
        <position position="353"/>
    </location>
    <ligand>
        <name>Zn(2+)</name>
        <dbReference type="ChEBI" id="CHEBI:29105"/>
        <label>2</label>
    </ligand>
</feature>
<feature type="binding site" evidence="2">
    <location>
        <position position="357"/>
    </location>
    <ligand>
        <name>Zn(2+)</name>
        <dbReference type="ChEBI" id="CHEBI:29105"/>
        <label>2</label>
    </ligand>
</feature>
<accession>Q0VCS9</accession>
<protein>
    <recommendedName>
        <fullName>Ankyrin repeat and MYND domain-containing protein 2</fullName>
    </recommendedName>
</protein>